<keyword id="KW-0150">Chloroplast</keyword>
<keyword id="KW-0472">Membrane</keyword>
<keyword id="KW-0602">Photosynthesis</keyword>
<keyword id="KW-0604">Photosystem II</keyword>
<keyword id="KW-0934">Plastid</keyword>
<keyword id="KW-0674">Reaction center</keyword>
<keyword id="KW-0793">Thylakoid</keyword>
<keyword id="KW-0812">Transmembrane</keyword>
<keyword id="KW-1133">Transmembrane helix</keyword>
<organism>
    <name type="scientific">Phalaenopsis aphrodite subsp. formosana</name>
    <name type="common">Moth orchid</name>
    <dbReference type="NCBI Taxonomy" id="308872"/>
    <lineage>
        <taxon>Eukaryota</taxon>
        <taxon>Viridiplantae</taxon>
        <taxon>Streptophyta</taxon>
        <taxon>Embryophyta</taxon>
        <taxon>Tracheophyta</taxon>
        <taxon>Spermatophyta</taxon>
        <taxon>Magnoliopsida</taxon>
        <taxon>Liliopsida</taxon>
        <taxon>Asparagales</taxon>
        <taxon>Orchidaceae</taxon>
        <taxon>Epidendroideae</taxon>
        <taxon>Vandeae</taxon>
        <taxon>Aeridinae</taxon>
        <taxon>Phalaenopsis</taxon>
    </lineage>
</organism>
<reference key="1">
    <citation type="journal article" date="2006" name="Mol. Biol. Evol.">
        <title>The chloroplast genome of Phalaenopsis aphrodite (Orchidaceae): comparative analysis of evolutionary rate with that of grasses and its phylogenetic implications.</title>
        <authorList>
            <person name="Chang C.-C."/>
            <person name="Lin H.-C."/>
            <person name="Lin I.-P."/>
            <person name="Chow T.-Y."/>
            <person name="Chen H.-H."/>
            <person name="Chen W.-H."/>
            <person name="Cheng C.-H."/>
            <person name="Lin C.-Y."/>
            <person name="Liu S.-M."/>
            <person name="Chang C.-C."/>
            <person name="Chaw S.-M."/>
        </authorList>
    </citation>
    <scope>NUCLEOTIDE SEQUENCE [LARGE SCALE GENOMIC DNA]</scope>
    <source>
        <strain>cv. Taisugar TS-97</strain>
    </source>
</reference>
<sequence>MTIAFQLAVFALIATSLILLISVPVVFASSDGWSSNKNIVFSGTSLWIGLVFLVAILNSLIS</sequence>
<comment type="function">
    <text evidence="1">May control the interaction of photosystem II (PSII) cores with the light-harvesting antenna, regulates electron flow through the 2 photosystem reaction centers. PSII is a light-driven water plastoquinone oxidoreductase, using light energy to abstract electrons from H(2)O, generating a proton gradient subsequently used for ATP formation.</text>
</comment>
<comment type="subunit">
    <text evidence="1">PSII is composed of 1 copy each of membrane proteins PsbA, PsbB, PsbC, PsbD, PsbE, PsbF, PsbH, PsbI, PsbJ, PsbK, PsbL, PsbM, PsbT, PsbY, PsbZ, Psb30/Ycf12, at least 3 peripheral proteins of the oxygen-evolving complex and a large number of cofactors. It forms dimeric complexes.</text>
</comment>
<comment type="subcellular location">
    <subcellularLocation>
        <location evidence="1">Plastid</location>
        <location evidence="1">Chloroplast thylakoid membrane</location>
        <topology evidence="1">Multi-pass membrane protein</topology>
    </subcellularLocation>
</comment>
<comment type="similarity">
    <text evidence="1">Belongs to the PsbZ family.</text>
</comment>
<proteinExistence type="inferred from homology"/>
<gene>
    <name evidence="1" type="primary">psbZ</name>
</gene>
<evidence type="ECO:0000255" key="1">
    <source>
        <dbReference type="HAMAP-Rule" id="MF_00644"/>
    </source>
</evidence>
<dbReference type="EMBL" id="AY916449">
    <property type="protein sequence ID" value="AAW82500.1"/>
    <property type="molecule type" value="Genomic_DNA"/>
</dbReference>
<dbReference type="RefSeq" id="YP_358575.1">
    <property type="nucleotide sequence ID" value="NC_007499.1"/>
</dbReference>
<dbReference type="SMR" id="Q3BAP3"/>
<dbReference type="GeneID" id="3741763"/>
<dbReference type="GO" id="GO:0009535">
    <property type="term" value="C:chloroplast thylakoid membrane"/>
    <property type="evidence" value="ECO:0007669"/>
    <property type="project" value="UniProtKB-SubCell"/>
</dbReference>
<dbReference type="GO" id="GO:0009539">
    <property type="term" value="C:photosystem II reaction center"/>
    <property type="evidence" value="ECO:0007669"/>
    <property type="project" value="InterPro"/>
</dbReference>
<dbReference type="GO" id="GO:0015979">
    <property type="term" value="P:photosynthesis"/>
    <property type="evidence" value="ECO:0007669"/>
    <property type="project" value="UniProtKB-UniRule"/>
</dbReference>
<dbReference type="GO" id="GO:0042549">
    <property type="term" value="P:photosystem II stabilization"/>
    <property type="evidence" value="ECO:0007669"/>
    <property type="project" value="InterPro"/>
</dbReference>
<dbReference type="FunFam" id="1.10.287.740:FF:000001">
    <property type="entry name" value="Photosystem II reaction center protein Z"/>
    <property type="match status" value="1"/>
</dbReference>
<dbReference type="Gene3D" id="1.10.287.740">
    <property type="entry name" value="Photosystem II PsbZ, reaction centre"/>
    <property type="match status" value="1"/>
</dbReference>
<dbReference type="HAMAP" id="MF_00644">
    <property type="entry name" value="PSII_PsbZ"/>
    <property type="match status" value="1"/>
</dbReference>
<dbReference type="InterPro" id="IPR002644">
    <property type="entry name" value="PSII_PsbZ"/>
</dbReference>
<dbReference type="InterPro" id="IPR036512">
    <property type="entry name" value="PSII_PsbZ_sf"/>
</dbReference>
<dbReference type="NCBIfam" id="TIGR03043">
    <property type="entry name" value="PS_II_psbZ"/>
    <property type="match status" value="1"/>
</dbReference>
<dbReference type="PANTHER" id="PTHR34971">
    <property type="entry name" value="PHOTOSYSTEM II REACTION CENTER PROTEIN Z"/>
    <property type="match status" value="1"/>
</dbReference>
<dbReference type="PANTHER" id="PTHR34971:SF2">
    <property type="entry name" value="PHOTOSYSTEM II REACTION CENTER PROTEIN Z"/>
    <property type="match status" value="1"/>
</dbReference>
<dbReference type="Pfam" id="PF01737">
    <property type="entry name" value="Ycf9"/>
    <property type="match status" value="1"/>
</dbReference>
<dbReference type="SUPFAM" id="SSF161055">
    <property type="entry name" value="PsbZ-like"/>
    <property type="match status" value="1"/>
</dbReference>
<name>PSBZ_PHAAO</name>
<feature type="chain" id="PRO_0000277229" description="Photosystem II reaction center protein Z">
    <location>
        <begin position="1"/>
        <end position="62"/>
    </location>
</feature>
<feature type="transmembrane region" description="Helical" evidence="1">
    <location>
        <begin position="8"/>
        <end position="28"/>
    </location>
</feature>
<feature type="transmembrane region" description="Helical" evidence="1">
    <location>
        <begin position="41"/>
        <end position="61"/>
    </location>
</feature>
<accession>Q3BAP3</accession>
<geneLocation type="chloroplast"/>
<protein>
    <recommendedName>
        <fullName evidence="1">Photosystem II reaction center protein Z</fullName>
        <shortName evidence="1">PSII-Z</shortName>
    </recommendedName>
</protein>